<evidence type="ECO:0000250" key="1">
    <source>
        <dbReference type="UniProtKB" id="Q06850"/>
    </source>
</evidence>
<evidence type="ECO:0000255" key="2"/>
<evidence type="ECO:0000255" key="3">
    <source>
        <dbReference type="PROSITE-ProRule" id="PRU00159"/>
    </source>
</evidence>
<evidence type="ECO:0000255" key="4">
    <source>
        <dbReference type="PROSITE-ProRule" id="PRU00448"/>
    </source>
</evidence>
<evidence type="ECO:0000303" key="5">
    <source>
    </source>
</evidence>
<evidence type="ECO:0000305" key="6"/>
<evidence type="ECO:0000312" key="7">
    <source>
        <dbReference type="EMBL" id="BAD34425.1"/>
    </source>
</evidence>
<evidence type="ECO:0000312" key="8">
    <source>
        <dbReference type="EMBL" id="BAF25571.1"/>
    </source>
</evidence>
<protein>
    <recommendedName>
        <fullName evidence="6">Calcium-dependent protein kinase 22</fullName>
        <shortName evidence="6">OsCDPK22</shortName>
        <shortName evidence="5">OsCPK22</shortName>
        <ecNumber evidence="6">2.7.11.1</ecNumber>
    </recommendedName>
</protein>
<name>CDPKM_ORYSJ</name>
<proteinExistence type="inferred from homology"/>
<keyword id="KW-0067">ATP-binding</keyword>
<keyword id="KW-0106">Calcium</keyword>
<keyword id="KW-0418">Kinase</keyword>
<keyword id="KW-0449">Lipoprotein</keyword>
<keyword id="KW-0472">Membrane</keyword>
<keyword id="KW-0479">Metal-binding</keyword>
<keyword id="KW-0519">Myristate</keyword>
<keyword id="KW-0547">Nucleotide-binding</keyword>
<keyword id="KW-1185">Reference proteome</keyword>
<keyword id="KW-0677">Repeat</keyword>
<keyword id="KW-0723">Serine/threonine-protein kinase</keyword>
<keyword id="KW-0808">Transferase</keyword>
<reference key="1">
    <citation type="journal article" date="2005" name="Nature">
        <title>The map-based sequence of the rice genome.</title>
        <authorList>
            <consortium name="International rice genome sequencing project (IRGSP)"/>
        </authorList>
    </citation>
    <scope>NUCLEOTIDE SEQUENCE [LARGE SCALE GENOMIC DNA]</scope>
    <source>
        <strain>cv. Nipponbare</strain>
    </source>
</reference>
<reference key="2">
    <citation type="journal article" date="2008" name="Nucleic Acids Res.">
        <title>The rice annotation project database (RAP-DB): 2008 update.</title>
        <authorList>
            <consortium name="The rice annotation project (RAP)"/>
        </authorList>
    </citation>
    <scope>GENOME REANNOTATION</scope>
    <source>
        <strain>cv. Nipponbare</strain>
    </source>
</reference>
<reference key="3">
    <citation type="journal article" date="2013" name="Rice">
        <title>Improvement of the Oryza sativa Nipponbare reference genome using next generation sequence and optical map data.</title>
        <authorList>
            <person name="Kawahara Y."/>
            <person name="de la Bastide M."/>
            <person name="Hamilton J.P."/>
            <person name="Kanamori H."/>
            <person name="McCombie W.R."/>
            <person name="Ouyang S."/>
            <person name="Schwartz D.C."/>
            <person name="Tanaka T."/>
            <person name="Wu J."/>
            <person name="Zhou S."/>
            <person name="Childs K.L."/>
            <person name="Davidson R.M."/>
            <person name="Lin H."/>
            <person name="Quesada-Ocampo L."/>
            <person name="Vaillancourt B."/>
            <person name="Sakai H."/>
            <person name="Lee S.S."/>
            <person name="Kim J."/>
            <person name="Numa H."/>
            <person name="Itoh T."/>
            <person name="Buell C.R."/>
            <person name="Matsumoto T."/>
        </authorList>
    </citation>
    <scope>GENOME REANNOTATION</scope>
    <source>
        <strain>cv. Nipponbare</strain>
    </source>
</reference>
<reference key="4">
    <citation type="journal article" date="2005" name="Plant Cell Physiol.">
        <title>Genome-wide identification of the rice calcium-dependent protein kinase and its closely related kinase gene families: comprehensive analysis of the CDPKs gene family in rice.</title>
        <authorList>
            <person name="Asano T."/>
            <person name="Tanaka N."/>
            <person name="Yang G."/>
            <person name="Hayashi N."/>
            <person name="Komatsu S."/>
        </authorList>
    </citation>
    <scope>GENE FAMILY</scope>
    <scope>NOMENCLATURE</scope>
</reference>
<gene>
    <name evidence="5" type="primary">CPK22</name>
    <name evidence="8" type="ordered locus">Os09g0514200</name>
    <name evidence="6" type="ordered locus">LOC_Os09g33910</name>
    <name evidence="7" type="ORF">P0450E05.16</name>
</gene>
<dbReference type="EC" id="2.7.11.1" evidence="6"/>
<dbReference type="EMBL" id="AP006756">
    <property type="protein sequence ID" value="BAD34425.1"/>
    <property type="molecule type" value="Genomic_DNA"/>
</dbReference>
<dbReference type="EMBL" id="AP008215">
    <property type="protein sequence ID" value="BAF25571.1"/>
    <property type="molecule type" value="Genomic_DNA"/>
</dbReference>
<dbReference type="EMBL" id="AP014965">
    <property type="protein sequence ID" value="BAT08942.1"/>
    <property type="molecule type" value="Genomic_DNA"/>
</dbReference>
<dbReference type="RefSeq" id="XP_015611715.1">
    <property type="nucleotide sequence ID" value="XM_015756229.1"/>
</dbReference>
<dbReference type="SMR" id="Q69IM9"/>
<dbReference type="FunCoup" id="Q69IM9">
    <property type="interactions" value="628"/>
</dbReference>
<dbReference type="STRING" id="39947.Q69IM9"/>
<dbReference type="PaxDb" id="39947-Q69IM9"/>
<dbReference type="EnsemblPlants" id="Os09t0514200-01">
    <property type="protein sequence ID" value="Os09t0514200-01"/>
    <property type="gene ID" value="Os09g0514200"/>
</dbReference>
<dbReference type="Gramene" id="Os09t0514200-01">
    <property type="protein sequence ID" value="Os09t0514200-01"/>
    <property type="gene ID" value="Os09g0514200"/>
</dbReference>
<dbReference type="KEGG" id="dosa:Os09g0514200"/>
<dbReference type="eggNOG" id="KOG0032">
    <property type="taxonomic scope" value="Eukaryota"/>
</dbReference>
<dbReference type="HOGENOM" id="CLU_000288_37_3_1"/>
<dbReference type="InParanoid" id="Q69IM9"/>
<dbReference type="OMA" id="QGGINFQ"/>
<dbReference type="OrthoDB" id="40902at2759"/>
<dbReference type="Proteomes" id="UP000000763">
    <property type="component" value="Chromosome 9"/>
</dbReference>
<dbReference type="Proteomes" id="UP000059680">
    <property type="component" value="Chromosome 9"/>
</dbReference>
<dbReference type="GO" id="GO:0005737">
    <property type="term" value="C:cytoplasm"/>
    <property type="evidence" value="ECO:0000318"/>
    <property type="project" value="GO_Central"/>
</dbReference>
<dbReference type="GO" id="GO:0005634">
    <property type="term" value="C:nucleus"/>
    <property type="evidence" value="ECO:0000318"/>
    <property type="project" value="GO_Central"/>
</dbReference>
<dbReference type="GO" id="GO:0005886">
    <property type="term" value="C:plasma membrane"/>
    <property type="evidence" value="ECO:0000318"/>
    <property type="project" value="GO_Central"/>
</dbReference>
<dbReference type="GO" id="GO:0005524">
    <property type="term" value="F:ATP binding"/>
    <property type="evidence" value="ECO:0007669"/>
    <property type="project" value="UniProtKB-KW"/>
</dbReference>
<dbReference type="GO" id="GO:0005509">
    <property type="term" value="F:calcium ion binding"/>
    <property type="evidence" value="ECO:0007669"/>
    <property type="project" value="InterPro"/>
</dbReference>
<dbReference type="GO" id="GO:0009931">
    <property type="term" value="F:calcium-dependent protein serine/threonine kinase activity"/>
    <property type="evidence" value="ECO:0000318"/>
    <property type="project" value="GO_Central"/>
</dbReference>
<dbReference type="GO" id="GO:0004683">
    <property type="term" value="F:calcium/calmodulin-dependent protein kinase activity"/>
    <property type="evidence" value="ECO:0000318"/>
    <property type="project" value="GO_Central"/>
</dbReference>
<dbReference type="GO" id="GO:0005516">
    <property type="term" value="F:calmodulin binding"/>
    <property type="evidence" value="ECO:0000318"/>
    <property type="project" value="GO_Central"/>
</dbReference>
<dbReference type="GO" id="GO:0106310">
    <property type="term" value="F:protein serine kinase activity"/>
    <property type="evidence" value="ECO:0007669"/>
    <property type="project" value="RHEA"/>
</dbReference>
<dbReference type="GO" id="GO:0035556">
    <property type="term" value="P:intracellular signal transduction"/>
    <property type="evidence" value="ECO:0000318"/>
    <property type="project" value="GO_Central"/>
</dbReference>
<dbReference type="CDD" id="cd00051">
    <property type="entry name" value="EFh"/>
    <property type="match status" value="1"/>
</dbReference>
<dbReference type="CDD" id="cd05117">
    <property type="entry name" value="STKc_CAMK"/>
    <property type="match status" value="1"/>
</dbReference>
<dbReference type="FunFam" id="1.10.510.10:FF:000067">
    <property type="entry name" value="calcium-dependent protein kinase 13"/>
    <property type="match status" value="1"/>
</dbReference>
<dbReference type="FunFam" id="3.30.200.20:FF:000462">
    <property type="entry name" value="Calcium-dependent protein kinase 24"/>
    <property type="match status" value="1"/>
</dbReference>
<dbReference type="FunFam" id="1.10.238.10:FF:000050">
    <property type="entry name" value="Calcium-dependent protein kinase 7"/>
    <property type="match status" value="1"/>
</dbReference>
<dbReference type="Gene3D" id="1.10.238.10">
    <property type="entry name" value="EF-hand"/>
    <property type="match status" value="1"/>
</dbReference>
<dbReference type="Gene3D" id="3.30.200.20">
    <property type="entry name" value="Phosphorylase Kinase, domain 1"/>
    <property type="match status" value="1"/>
</dbReference>
<dbReference type="Gene3D" id="1.10.510.10">
    <property type="entry name" value="Transferase(Phosphotransferase) domain 1"/>
    <property type="match status" value="1"/>
</dbReference>
<dbReference type="InterPro" id="IPR050205">
    <property type="entry name" value="CDPK_Ser/Thr_kinases"/>
</dbReference>
<dbReference type="InterPro" id="IPR011992">
    <property type="entry name" value="EF-hand-dom_pair"/>
</dbReference>
<dbReference type="InterPro" id="IPR018247">
    <property type="entry name" value="EF_Hand_1_Ca_BS"/>
</dbReference>
<dbReference type="InterPro" id="IPR002048">
    <property type="entry name" value="EF_hand_dom"/>
</dbReference>
<dbReference type="InterPro" id="IPR011009">
    <property type="entry name" value="Kinase-like_dom_sf"/>
</dbReference>
<dbReference type="InterPro" id="IPR000719">
    <property type="entry name" value="Prot_kinase_dom"/>
</dbReference>
<dbReference type="InterPro" id="IPR017441">
    <property type="entry name" value="Protein_kinase_ATP_BS"/>
</dbReference>
<dbReference type="InterPro" id="IPR008271">
    <property type="entry name" value="Ser/Thr_kinase_AS"/>
</dbReference>
<dbReference type="PANTHER" id="PTHR24349">
    <property type="entry name" value="SERINE/THREONINE-PROTEIN KINASE"/>
    <property type="match status" value="1"/>
</dbReference>
<dbReference type="Pfam" id="PF13499">
    <property type="entry name" value="EF-hand_7"/>
    <property type="match status" value="2"/>
</dbReference>
<dbReference type="Pfam" id="PF00069">
    <property type="entry name" value="Pkinase"/>
    <property type="match status" value="1"/>
</dbReference>
<dbReference type="SMART" id="SM00054">
    <property type="entry name" value="EFh"/>
    <property type="match status" value="4"/>
</dbReference>
<dbReference type="SMART" id="SM00220">
    <property type="entry name" value="S_TKc"/>
    <property type="match status" value="1"/>
</dbReference>
<dbReference type="SUPFAM" id="SSF47473">
    <property type="entry name" value="EF-hand"/>
    <property type="match status" value="1"/>
</dbReference>
<dbReference type="SUPFAM" id="SSF56112">
    <property type="entry name" value="Protein kinase-like (PK-like)"/>
    <property type="match status" value="1"/>
</dbReference>
<dbReference type="PROSITE" id="PS00018">
    <property type="entry name" value="EF_HAND_1"/>
    <property type="match status" value="4"/>
</dbReference>
<dbReference type="PROSITE" id="PS50222">
    <property type="entry name" value="EF_HAND_2"/>
    <property type="match status" value="4"/>
</dbReference>
<dbReference type="PROSITE" id="PS00107">
    <property type="entry name" value="PROTEIN_KINASE_ATP"/>
    <property type="match status" value="1"/>
</dbReference>
<dbReference type="PROSITE" id="PS50011">
    <property type="entry name" value="PROTEIN_KINASE_DOM"/>
    <property type="match status" value="1"/>
</dbReference>
<dbReference type="PROSITE" id="PS00108">
    <property type="entry name" value="PROTEIN_KINASE_ST"/>
    <property type="match status" value="1"/>
</dbReference>
<accession>Q69IM9</accession>
<feature type="initiator methionine" description="Removed" evidence="2">
    <location>
        <position position="1"/>
    </location>
</feature>
<feature type="chain" id="PRO_0000437565" description="Calcium-dependent protein kinase 22">
    <location>
        <begin position="2"/>
        <end position="577"/>
    </location>
</feature>
<feature type="domain" description="Protein kinase" evidence="3">
    <location>
        <begin position="105"/>
        <end position="368"/>
    </location>
</feature>
<feature type="domain" description="EF-hand 1" evidence="4">
    <location>
        <begin position="411"/>
        <end position="446"/>
    </location>
</feature>
<feature type="domain" description="EF-hand 2" evidence="4">
    <location>
        <begin position="447"/>
        <end position="482"/>
    </location>
</feature>
<feature type="domain" description="EF-hand 3" evidence="4">
    <location>
        <begin position="483"/>
        <end position="518"/>
    </location>
</feature>
<feature type="domain" description="EF-hand 4" evidence="4">
    <location>
        <begin position="520"/>
        <end position="553"/>
    </location>
</feature>
<feature type="region of interest" description="Autoinhibitory domain" evidence="1">
    <location>
        <begin position="374"/>
        <end position="404"/>
    </location>
</feature>
<feature type="active site" description="Proton acceptor" evidence="3">
    <location>
        <position position="234"/>
    </location>
</feature>
<feature type="binding site" evidence="3">
    <location>
        <begin position="111"/>
        <end position="119"/>
    </location>
    <ligand>
        <name>ATP</name>
        <dbReference type="ChEBI" id="CHEBI:30616"/>
    </ligand>
</feature>
<feature type="binding site" evidence="3">
    <location>
        <position position="134"/>
    </location>
    <ligand>
        <name>ATP</name>
        <dbReference type="ChEBI" id="CHEBI:30616"/>
    </ligand>
</feature>
<feature type="binding site" evidence="4">
    <location>
        <position position="424"/>
    </location>
    <ligand>
        <name>Ca(2+)</name>
        <dbReference type="ChEBI" id="CHEBI:29108"/>
        <label>1</label>
    </ligand>
</feature>
<feature type="binding site" evidence="4">
    <location>
        <position position="426"/>
    </location>
    <ligand>
        <name>Ca(2+)</name>
        <dbReference type="ChEBI" id="CHEBI:29108"/>
        <label>1</label>
    </ligand>
</feature>
<feature type="binding site" evidence="4">
    <location>
        <position position="428"/>
    </location>
    <ligand>
        <name>Ca(2+)</name>
        <dbReference type="ChEBI" id="CHEBI:29108"/>
        <label>1</label>
    </ligand>
</feature>
<feature type="binding site" evidence="4">
    <location>
        <position position="430"/>
    </location>
    <ligand>
        <name>Ca(2+)</name>
        <dbReference type="ChEBI" id="CHEBI:29108"/>
        <label>1</label>
    </ligand>
</feature>
<feature type="binding site" evidence="4">
    <location>
        <position position="435"/>
    </location>
    <ligand>
        <name>Ca(2+)</name>
        <dbReference type="ChEBI" id="CHEBI:29108"/>
        <label>1</label>
    </ligand>
</feature>
<feature type="binding site" evidence="4">
    <location>
        <position position="460"/>
    </location>
    <ligand>
        <name>Ca(2+)</name>
        <dbReference type="ChEBI" id="CHEBI:29108"/>
        <label>2</label>
    </ligand>
</feature>
<feature type="binding site" evidence="4">
    <location>
        <position position="462"/>
    </location>
    <ligand>
        <name>Ca(2+)</name>
        <dbReference type="ChEBI" id="CHEBI:29108"/>
        <label>2</label>
    </ligand>
</feature>
<feature type="binding site" evidence="4">
    <location>
        <position position="464"/>
    </location>
    <ligand>
        <name>Ca(2+)</name>
        <dbReference type="ChEBI" id="CHEBI:29108"/>
        <label>2</label>
    </ligand>
</feature>
<feature type="binding site" evidence="4">
    <location>
        <position position="466"/>
    </location>
    <ligand>
        <name>Ca(2+)</name>
        <dbReference type="ChEBI" id="CHEBI:29108"/>
        <label>2</label>
    </ligand>
</feature>
<feature type="binding site" evidence="4">
    <location>
        <position position="471"/>
    </location>
    <ligand>
        <name>Ca(2+)</name>
        <dbReference type="ChEBI" id="CHEBI:29108"/>
        <label>2</label>
    </ligand>
</feature>
<feature type="binding site" evidence="4">
    <location>
        <position position="496"/>
    </location>
    <ligand>
        <name>Ca(2+)</name>
        <dbReference type="ChEBI" id="CHEBI:29108"/>
        <label>3</label>
    </ligand>
</feature>
<feature type="binding site" evidence="4">
    <location>
        <position position="498"/>
    </location>
    <ligand>
        <name>Ca(2+)</name>
        <dbReference type="ChEBI" id="CHEBI:29108"/>
        <label>3</label>
    </ligand>
</feature>
<feature type="binding site" evidence="4">
    <location>
        <position position="500"/>
    </location>
    <ligand>
        <name>Ca(2+)</name>
        <dbReference type="ChEBI" id="CHEBI:29108"/>
        <label>3</label>
    </ligand>
</feature>
<feature type="binding site" evidence="4">
    <location>
        <position position="507"/>
    </location>
    <ligand>
        <name>Ca(2+)</name>
        <dbReference type="ChEBI" id="CHEBI:29108"/>
        <label>3</label>
    </ligand>
</feature>
<feature type="binding site" evidence="4">
    <location>
        <position position="531"/>
    </location>
    <ligand>
        <name>Ca(2+)</name>
        <dbReference type="ChEBI" id="CHEBI:29108"/>
        <label>4</label>
    </ligand>
</feature>
<feature type="binding site" evidence="4">
    <location>
        <position position="533"/>
    </location>
    <ligand>
        <name>Ca(2+)</name>
        <dbReference type="ChEBI" id="CHEBI:29108"/>
        <label>4</label>
    </ligand>
</feature>
<feature type="binding site" evidence="4">
    <location>
        <position position="535"/>
    </location>
    <ligand>
        <name>Ca(2+)</name>
        <dbReference type="ChEBI" id="CHEBI:29108"/>
        <label>4</label>
    </ligand>
</feature>
<feature type="binding site" evidence="4">
    <location>
        <position position="537"/>
    </location>
    <ligand>
        <name>Ca(2+)</name>
        <dbReference type="ChEBI" id="CHEBI:29108"/>
        <label>4</label>
    </ligand>
</feature>
<feature type="binding site" evidence="4">
    <location>
        <position position="542"/>
    </location>
    <ligand>
        <name>Ca(2+)</name>
        <dbReference type="ChEBI" id="CHEBI:29108"/>
        <label>4</label>
    </ligand>
</feature>
<feature type="lipid moiety-binding region" description="N-myristoyl glycine" evidence="2">
    <location>
        <position position="2"/>
    </location>
</feature>
<comment type="function">
    <text evidence="1">May play a role in signal transduction pathways that involve calcium as a second messenger.</text>
</comment>
<comment type="catalytic activity">
    <reaction evidence="6">
        <text>L-seryl-[protein] + ATP = O-phospho-L-seryl-[protein] + ADP + H(+)</text>
        <dbReference type="Rhea" id="RHEA:17989"/>
        <dbReference type="Rhea" id="RHEA-COMP:9863"/>
        <dbReference type="Rhea" id="RHEA-COMP:11604"/>
        <dbReference type="ChEBI" id="CHEBI:15378"/>
        <dbReference type="ChEBI" id="CHEBI:29999"/>
        <dbReference type="ChEBI" id="CHEBI:30616"/>
        <dbReference type="ChEBI" id="CHEBI:83421"/>
        <dbReference type="ChEBI" id="CHEBI:456216"/>
        <dbReference type="EC" id="2.7.11.1"/>
    </reaction>
</comment>
<comment type="catalytic activity">
    <reaction evidence="6">
        <text>L-threonyl-[protein] + ATP = O-phospho-L-threonyl-[protein] + ADP + H(+)</text>
        <dbReference type="Rhea" id="RHEA:46608"/>
        <dbReference type="Rhea" id="RHEA-COMP:11060"/>
        <dbReference type="Rhea" id="RHEA-COMP:11605"/>
        <dbReference type="ChEBI" id="CHEBI:15378"/>
        <dbReference type="ChEBI" id="CHEBI:30013"/>
        <dbReference type="ChEBI" id="CHEBI:30616"/>
        <dbReference type="ChEBI" id="CHEBI:61977"/>
        <dbReference type="ChEBI" id="CHEBI:456216"/>
        <dbReference type="EC" id="2.7.11.1"/>
    </reaction>
</comment>
<comment type="activity regulation">
    <text evidence="1">Activated by calcium. Autophosphorylation may play an important role in the regulation of the kinase activity.</text>
</comment>
<comment type="subcellular location">
    <subcellularLocation>
        <location evidence="6">Membrane</location>
        <topology evidence="6">Lipid-anchor</topology>
    </subcellularLocation>
</comment>
<comment type="domain">
    <text evidence="1">There are 3 contiguous domains conserved in the CDPK subfamily: a kinase domain, an autoinhibitory (junction) domain and a calmodulin-like domain. The autoinhibitory domain (374-404) inactivates kinase activity under calcium-free conditions.</text>
</comment>
<comment type="similarity">
    <text evidence="6">Belongs to the protein kinase superfamily. Ser/Thr protein kinase family. CDPK subfamily.</text>
</comment>
<sequence length="577" mass="63760">MGGCSSAFAVSTRMIRFSRGRVPAAILPVTSNDEPCCSCSPENNNKNNDGGGGGCDGGEHQKGKSWRRWQYRRCGGGGGGGGGRKNAILGDAADVKTAAGFAERYRLGAELGRGEFGVTRRCSDAATGEALACKTIRRKRLRRCRGDAEDVRREVEILRRISALGAGADSVVRLRDACEDSDGVHLVMELCEGGELFDRIFARGHYTERAAAKLARTIVGVVQLCHENGVMHRDLKPENFLFANKSEDSPLKAIDFGLSVFFKPGERFTQVVGSTYYMAPEVLNRSYGPEADVWSAGVILYILLCGVPPFWGDNDEKTVTAILQGGINFQREPWPKVSPHAKDLVSKMLDPDPSTRLTAKEVLEHPWLKNADRAPNVSLGEIVRSRLMQFSAMNKFKKKALGVVAKNLPVEEMDKYTQMFHKMDKDNSGNLTLEDLKLGLQINGHPVPETEIEMLLEAGDIDGNGTLDCEEFVTVLLHIKKMSNEEYLPKAFKFFDKDGNGFIEMEELMDALGDELGPTEQVVKDIIRDIDTDKDGRISYQEFESMMISGSDWRNASRRYSKANFSSLSRKLCKGNS</sequence>
<organism>
    <name type="scientific">Oryza sativa subsp. japonica</name>
    <name type="common">Rice</name>
    <dbReference type="NCBI Taxonomy" id="39947"/>
    <lineage>
        <taxon>Eukaryota</taxon>
        <taxon>Viridiplantae</taxon>
        <taxon>Streptophyta</taxon>
        <taxon>Embryophyta</taxon>
        <taxon>Tracheophyta</taxon>
        <taxon>Spermatophyta</taxon>
        <taxon>Magnoliopsida</taxon>
        <taxon>Liliopsida</taxon>
        <taxon>Poales</taxon>
        <taxon>Poaceae</taxon>
        <taxon>BOP clade</taxon>
        <taxon>Oryzoideae</taxon>
        <taxon>Oryzeae</taxon>
        <taxon>Oryzinae</taxon>
        <taxon>Oryza</taxon>
        <taxon>Oryza sativa</taxon>
    </lineage>
</organism>